<name>THIG_ANASK</name>
<gene>
    <name evidence="1" type="primary">thiG</name>
    <name type="ordered locus">AnaeK_1335</name>
</gene>
<accession>B4UIG2</accession>
<sequence length="257" mass="26926">MADTWSIGAHAFTSRLLVGTGKYPDFPTMQRALAASGAEVVTVAVRRLDLSKKGEESLLAWIPKGMKLLPNTAACFTAEEAIRTARLGRELEMGDLVKLEVIGDRRTLFPDVEGLIQAAKVLVKEGFTVLPYTNDDPVTAKKLEDAGCAAVMPLGAPIGSGLGLRNPYNLRIIMETVQVPVLVDAGVGTASDAALAMELGAVAVLMNTAIAEAKDPVLMAEAMRAGVEGGRKAFLAGRIPMKLHAAASSPMSGLIGS</sequence>
<comment type="function">
    <text evidence="1">Catalyzes the rearrangement of 1-deoxy-D-xylulose 5-phosphate (DXP) to produce the thiazole phosphate moiety of thiamine. Sulfur is provided by the thiocarboxylate moiety of the carrier protein ThiS. In vitro, sulfur can be provided by H(2)S.</text>
</comment>
<comment type="catalytic activity">
    <reaction evidence="1">
        <text>[ThiS sulfur-carrier protein]-C-terminal-Gly-aminoethanethioate + 2-iminoacetate + 1-deoxy-D-xylulose 5-phosphate = [ThiS sulfur-carrier protein]-C-terminal Gly-Gly + 2-[(2R,5Z)-2-carboxy-4-methylthiazol-5(2H)-ylidene]ethyl phosphate + 2 H2O + H(+)</text>
        <dbReference type="Rhea" id="RHEA:26297"/>
        <dbReference type="Rhea" id="RHEA-COMP:12909"/>
        <dbReference type="Rhea" id="RHEA-COMP:19908"/>
        <dbReference type="ChEBI" id="CHEBI:15377"/>
        <dbReference type="ChEBI" id="CHEBI:15378"/>
        <dbReference type="ChEBI" id="CHEBI:57792"/>
        <dbReference type="ChEBI" id="CHEBI:62899"/>
        <dbReference type="ChEBI" id="CHEBI:77846"/>
        <dbReference type="ChEBI" id="CHEBI:90778"/>
        <dbReference type="ChEBI" id="CHEBI:232372"/>
        <dbReference type="EC" id="2.8.1.10"/>
    </reaction>
</comment>
<comment type="pathway">
    <text evidence="1">Cofactor biosynthesis; thiamine diphosphate biosynthesis.</text>
</comment>
<comment type="subunit">
    <text evidence="1">Homotetramer. Forms heterodimers with either ThiH or ThiS.</text>
</comment>
<comment type="subcellular location">
    <subcellularLocation>
        <location evidence="1">Cytoplasm</location>
    </subcellularLocation>
</comment>
<comment type="similarity">
    <text evidence="1">Belongs to the ThiG family.</text>
</comment>
<organism>
    <name type="scientific">Anaeromyxobacter sp. (strain K)</name>
    <dbReference type="NCBI Taxonomy" id="447217"/>
    <lineage>
        <taxon>Bacteria</taxon>
        <taxon>Pseudomonadati</taxon>
        <taxon>Myxococcota</taxon>
        <taxon>Myxococcia</taxon>
        <taxon>Myxococcales</taxon>
        <taxon>Cystobacterineae</taxon>
        <taxon>Anaeromyxobacteraceae</taxon>
        <taxon>Anaeromyxobacter</taxon>
    </lineage>
</organism>
<keyword id="KW-0963">Cytoplasm</keyword>
<keyword id="KW-0704">Schiff base</keyword>
<keyword id="KW-0784">Thiamine biosynthesis</keyword>
<keyword id="KW-0808">Transferase</keyword>
<proteinExistence type="inferred from homology"/>
<evidence type="ECO:0000255" key="1">
    <source>
        <dbReference type="HAMAP-Rule" id="MF_00443"/>
    </source>
</evidence>
<reference key="1">
    <citation type="submission" date="2008-08" db="EMBL/GenBank/DDBJ databases">
        <title>Complete sequence of Anaeromyxobacter sp. K.</title>
        <authorList>
            <consortium name="US DOE Joint Genome Institute"/>
            <person name="Lucas S."/>
            <person name="Copeland A."/>
            <person name="Lapidus A."/>
            <person name="Glavina del Rio T."/>
            <person name="Dalin E."/>
            <person name="Tice H."/>
            <person name="Bruce D."/>
            <person name="Goodwin L."/>
            <person name="Pitluck S."/>
            <person name="Saunders E."/>
            <person name="Brettin T."/>
            <person name="Detter J.C."/>
            <person name="Han C."/>
            <person name="Larimer F."/>
            <person name="Land M."/>
            <person name="Hauser L."/>
            <person name="Kyrpides N."/>
            <person name="Ovchinnikiva G."/>
            <person name="Beliaev A."/>
        </authorList>
    </citation>
    <scope>NUCLEOTIDE SEQUENCE [LARGE SCALE GENOMIC DNA]</scope>
    <source>
        <strain>K</strain>
    </source>
</reference>
<dbReference type="EC" id="2.8.1.10" evidence="1"/>
<dbReference type="EMBL" id="CP001131">
    <property type="protein sequence ID" value="ACG72567.1"/>
    <property type="molecule type" value="Genomic_DNA"/>
</dbReference>
<dbReference type="RefSeq" id="WP_012525390.1">
    <property type="nucleotide sequence ID" value="NC_011145.1"/>
</dbReference>
<dbReference type="SMR" id="B4UIG2"/>
<dbReference type="KEGG" id="ank:AnaeK_1335"/>
<dbReference type="HOGENOM" id="CLU_062233_1_0_7"/>
<dbReference type="OrthoDB" id="9805935at2"/>
<dbReference type="UniPathway" id="UPA00060"/>
<dbReference type="Proteomes" id="UP000001871">
    <property type="component" value="Chromosome"/>
</dbReference>
<dbReference type="GO" id="GO:0005737">
    <property type="term" value="C:cytoplasm"/>
    <property type="evidence" value="ECO:0007669"/>
    <property type="project" value="UniProtKB-SubCell"/>
</dbReference>
<dbReference type="GO" id="GO:1990107">
    <property type="term" value="F:thiazole synthase activity"/>
    <property type="evidence" value="ECO:0007669"/>
    <property type="project" value="UniProtKB-EC"/>
</dbReference>
<dbReference type="GO" id="GO:0009229">
    <property type="term" value="P:thiamine diphosphate biosynthetic process"/>
    <property type="evidence" value="ECO:0007669"/>
    <property type="project" value="UniProtKB-UniRule"/>
</dbReference>
<dbReference type="CDD" id="cd04728">
    <property type="entry name" value="ThiG"/>
    <property type="match status" value="1"/>
</dbReference>
<dbReference type="Gene3D" id="3.20.20.70">
    <property type="entry name" value="Aldolase class I"/>
    <property type="match status" value="1"/>
</dbReference>
<dbReference type="HAMAP" id="MF_00443">
    <property type="entry name" value="ThiG"/>
    <property type="match status" value="1"/>
</dbReference>
<dbReference type="InterPro" id="IPR013785">
    <property type="entry name" value="Aldolase_TIM"/>
</dbReference>
<dbReference type="InterPro" id="IPR033983">
    <property type="entry name" value="Thiazole_synthase_ThiG"/>
</dbReference>
<dbReference type="InterPro" id="IPR008867">
    <property type="entry name" value="ThiG"/>
</dbReference>
<dbReference type="PANTHER" id="PTHR34266">
    <property type="entry name" value="THIAZOLE SYNTHASE"/>
    <property type="match status" value="1"/>
</dbReference>
<dbReference type="PANTHER" id="PTHR34266:SF2">
    <property type="entry name" value="THIAZOLE SYNTHASE"/>
    <property type="match status" value="1"/>
</dbReference>
<dbReference type="Pfam" id="PF05690">
    <property type="entry name" value="ThiG"/>
    <property type="match status" value="1"/>
</dbReference>
<dbReference type="SUPFAM" id="SSF110399">
    <property type="entry name" value="ThiG-like"/>
    <property type="match status" value="1"/>
</dbReference>
<protein>
    <recommendedName>
        <fullName evidence="1">Thiazole synthase</fullName>
        <ecNumber evidence="1">2.8.1.10</ecNumber>
    </recommendedName>
</protein>
<feature type="chain" id="PRO_1000124597" description="Thiazole synthase">
    <location>
        <begin position="1"/>
        <end position="257"/>
    </location>
</feature>
<feature type="active site" description="Schiff-base intermediate with DXP" evidence="1">
    <location>
        <position position="98"/>
    </location>
</feature>
<feature type="binding site" evidence="1">
    <location>
        <position position="159"/>
    </location>
    <ligand>
        <name>1-deoxy-D-xylulose 5-phosphate</name>
        <dbReference type="ChEBI" id="CHEBI:57792"/>
    </ligand>
</feature>
<feature type="binding site" evidence="1">
    <location>
        <begin position="185"/>
        <end position="186"/>
    </location>
    <ligand>
        <name>1-deoxy-D-xylulose 5-phosphate</name>
        <dbReference type="ChEBI" id="CHEBI:57792"/>
    </ligand>
</feature>
<feature type="binding site" evidence="1">
    <location>
        <begin position="207"/>
        <end position="208"/>
    </location>
    <ligand>
        <name>1-deoxy-D-xylulose 5-phosphate</name>
        <dbReference type="ChEBI" id="CHEBI:57792"/>
    </ligand>
</feature>